<proteinExistence type="inferred from homology"/>
<gene>
    <name evidence="1" type="primary">ruvB</name>
    <name type="ordered locus">BAMEG_4684</name>
</gene>
<dbReference type="EC" id="3.6.4.-" evidence="1"/>
<dbReference type="EMBL" id="CP001215">
    <property type="protein sequence ID" value="ACP15621.1"/>
    <property type="molecule type" value="Genomic_DNA"/>
</dbReference>
<dbReference type="RefSeq" id="WP_000344455.1">
    <property type="nucleotide sequence ID" value="NC_012581.1"/>
</dbReference>
<dbReference type="SMR" id="C3L6U9"/>
<dbReference type="GeneID" id="45024291"/>
<dbReference type="KEGG" id="bah:BAMEG_4684"/>
<dbReference type="HOGENOM" id="CLU_055599_1_0_9"/>
<dbReference type="GO" id="GO:0005737">
    <property type="term" value="C:cytoplasm"/>
    <property type="evidence" value="ECO:0007669"/>
    <property type="project" value="UniProtKB-SubCell"/>
</dbReference>
<dbReference type="GO" id="GO:0048476">
    <property type="term" value="C:Holliday junction resolvase complex"/>
    <property type="evidence" value="ECO:0007669"/>
    <property type="project" value="UniProtKB-UniRule"/>
</dbReference>
<dbReference type="GO" id="GO:0005524">
    <property type="term" value="F:ATP binding"/>
    <property type="evidence" value="ECO:0007669"/>
    <property type="project" value="UniProtKB-UniRule"/>
</dbReference>
<dbReference type="GO" id="GO:0016887">
    <property type="term" value="F:ATP hydrolysis activity"/>
    <property type="evidence" value="ECO:0007669"/>
    <property type="project" value="InterPro"/>
</dbReference>
<dbReference type="GO" id="GO:0000400">
    <property type="term" value="F:four-way junction DNA binding"/>
    <property type="evidence" value="ECO:0007669"/>
    <property type="project" value="UniProtKB-UniRule"/>
</dbReference>
<dbReference type="GO" id="GO:0009378">
    <property type="term" value="F:four-way junction helicase activity"/>
    <property type="evidence" value="ECO:0007669"/>
    <property type="project" value="InterPro"/>
</dbReference>
<dbReference type="GO" id="GO:0006310">
    <property type="term" value="P:DNA recombination"/>
    <property type="evidence" value="ECO:0007669"/>
    <property type="project" value="UniProtKB-UniRule"/>
</dbReference>
<dbReference type="GO" id="GO:0006281">
    <property type="term" value="P:DNA repair"/>
    <property type="evidence" value="ECO:0007669"/>
    <property type="project" value="UniProtKB-UniRule"/>
</dbReference>
<dbReference type="CDD" id="cd00009">
    <property type="entry name" value="AAA"/>
    <property type="match status" value="1"/>
</dbReference>
<dbReference type="Gene3D" id="1.10.8.60">
    <property type="match status" value="1"/>
</dbReference>
<dbReference type="Gene3D" id="3.40.50.300">
    <property type="entry name" value="P-loop containing nucleotide triphosphate hydrolases"/>
    <property type="match status" value="1"/>
</dbReference>
<dbReference type="Gene3D" id="1.10.10.10">
    <property type="entry name" value="Winged helix-like DNA-binding domain superfamily/Winged helix DNA-binding domain"/>
    <property type="match status" value="1"/>
</dbReference>
<dbReference type="HAMAP" id="MF_00016">
    <property type="entry name" value="DNA_HJ_migration_RuvB"/>
    <property type="match status" value="1"/>
</dbReference>
<dbReference type="InterPro" id="IPR003593">
    <property type="entry name" value="AAA+_ATPase"/>
</dbReference>
<dbReference type="InterPro" id="IPR041445">
    <property type="entry name" value="AAA_lid_4"/>
</dbReference>
<dbReference type="InterPro" id="IPR004605">
    <property type="entry name" value="DNA_helicase_Holl-junc_RuvB"/>
</dbReference>
<dbReference type="InterPro" id="IPR027417">
    <property type="entry name" value="P-loop_NTPase"/>
</dbReference>
<dbReference type="InterPro" id="IPR008824">
    <property type="entry name" value="RuvB-like_N"/>
</dbReference>
<dbReference type="InterPro" id="IPR008823">
    <property type="entry name" value="RuvB_C"/>
</dbReference>
<dbReference type="InterPro" id="IPR036388">
    <property type="entry name" value="WH-like_DNA-bd_sf"/>
</dbReference>
<dbReference type="InterPro" id="IPR036390">
    <property type="entry name" value="WH_DNA-bd_sf"/>
</dbReference>
<dbReference type="NCBIfam" id="NF000868">
    <property type="entry name" value="PRK00080.1"/>
    <property type="match status" value="1"/>
</dbReference>
<dbReference type="NCBIfam" id="TIGR00635">
    <property type="entry name" value="ruvB"/>
    <property type="match status" value="1"/>
</dbReference>
<dbReference type="PANTHER" id="PTHR42848">
    <property type="match status" value="1"/>
</dbReference>
<dbReference type="PANTHER" id="PTHR42848:SF1">
    <property type="entry name" value="HOLLIDAY JUNCTION BRANCH MIGRATION COMPLEX SUBUNIT RUVB"/>
    <property type="match status" value="1"/>
</dbReference>
<dbReference type="Pfam" id="PF17864">
    <property type="entry name" value="AAA_lid_4"/>
    <property type="match status" value="1"/>
</dbReference>
<dbReference type="Pfam" id="PF05491">
    <property type="entry name" value="RuvB_C"/>
    <property type="match status" value="1"/>
</dbReference>
<dbReference type="Pfam" id="PF05496">
    <property type="entry name" value="RuvB_N"/>
    <property type="match status" value="1"/>
</dbReference>
<dbReference type="SMART" id="SM00382">
    <property type="entry name" value="AAA"/>
    <property type="match status" value="1"/>
</dbReference>
<dbReference type="SUPFAM" id="SSF52540">
    <property type="entry name" value="P-loop containing nucleoside triphosphate hydrolases"/>
    <property type="match status" value="1"/>
</dbReference>
<dbReference type="SUPFAM" id="SSF46785">
    <property type="entry name" value="Winged helix' DNA-binding domain"/>
    <property type="match status" value="1"/>
</dbReference>
<comment type="function">
    <text evidence="1">The RuvA-RuvB-RuvC complex processes Holliday junction (HJ) DNA during genetic recombination and DNA repair, while the RuvA-RuvB complex plays an important role in the rescue of blocked DNA replication forks via replication fork reversal (RFR). RuvA specifically binds to HJ cruciform DNA, conferring on it an open structure. The RuvB hexamer acts as an ATP-dependent pump, pulling dsDNA into and through the RuvAB complex. RuvB forms 2 homohexamers on either side of HJ DNA bound by 1 or 2 RuvA tetramers; 4 subunits per hexamer contact DNA at a time. Coordinated motions by a converter formed by DNA-disengaged RuvB subunits stimulates ATP hydrolysis and nucleotide exchange. Immobilization of the converter enables RuvB to convert the ATP-contained energy into a lever motion, pulling 2 nucleotides of DNA out of the RuvA tetramer per ATP hydrolyzed, thus driving DNA branch migration. The RuvB motors rotate together with the DNA substrate, which together with the progressing nucleotide cycle form the mechanistic basis for DNA recombination by continuous HJ branch migration. Branch migration allows RuvC to scan DNA until it finds its consensus sequence, where it cleaves and resolves cruciform DNA.</text>
</comment>
<comment type="catalytic activity">
    <reaction evidence="1">
        <text>ATP + H2O = ADP + phosphate + H(+)</text>
        <dbReference type="Rhea" id="RHEA:13065"/>
        <dbReference type="ChEBI" id="CHEBI:15377"/>
        <dbReference type="ChEBI" id="CHEBI:15378"/>
        <dbReference type="ChEBI" id="CHEBI:30616"/>
        <dbReference type="ChEBI" id="CHEBI:43474"/>
        <dbReference type="ChEBI" id="CHEBI:456216"/>
    </reaction>
</comment>
<comment type="subunit">
    <text evidence="1">Homohexamer. Forms an RuvA(8)-RuvB(12)-Holliday junction (HJ) complex. HJ DNA is sandwiched between 2 RuvA tetramers; dsDNA enters through RuvA and exits via RuvB. An RuvB hexamer assembles on each DNA strand where it exits the tetramer. Each RuvB hexamer is contacted by two RuvA subunits (via domain III) on 2 adjacent RuvB subunits; this complex drives branch migration. In the full resolvosome a probable DNA-RuvA(4)-RuvB(12)-RuvC(2) complex forms which resolves the HJ.</text>
</comment>
<comment type="subcellular location">
    <subcellularLocation>
        <location evidence="1">Cytoplasm</location>
    </subcellularLocation>
</comment>
<comment type="domain">
    <text evidence="1">Has 3 domains, the large (RuvB-L) and small ATPase (RuvB-S) domains and the C-terminal head (RuvB-H) domain. The head domain binds DNA, while the ATPase domains jointly bind ATP, ADP or are empty depending on the state of the subunit in the translocation cycle. During a single DNA translocation step the structure of each domain remains the same, but their relative positions change.</text>
</comment>
<comment type="similarity">
    <text evidence="1">Belongs to the RuvB family.</text>
</comment>
<accession>C3L6U9</accession>
<keyword id="KW-0067">ATP-binding</keyword>
<keyword id="KW-0963">Cytoplasm</keyword>
<keyword id="KW-0227">DNA damage</keyword>
<keyword id="KW-0233">DNA recombination</keyword>
<keyword id="KW-0234">DNA repair</keyword>
<keyword id="KW-0238">DNA-binding</keyword>
<keyword id="KW-0378">Hydrolase</keyword>
<keyword id="KW-0547">Nucleotide-binding</keyword>
<evidence type="ECO:0000255" key="1">
    <source>
        <dbReference type="HAMAP-Rule" id="MF_00016"/>
    </source>
</evidence>
<feature type="chain" id="PRO_1000195197" description="Holliday junction branch migration complex subunit RuvB">
    <location>
        <begin position="1"/>
        <end position="333"/>
    </location>
</feature>
<feature type="region of interest" description="Large ATPase domain (RuvB-L)" evidence="1">
    <location>
        <begin position="1"/>
        <end position="182"/>
    </location>
</feature>
<feature type="region of interest" description="Small ATPAse domain (RuvB-S)" evidence="1">
    <location>
        <begin position="183"/>
        <end position="253"/>
    </location>
</feature>
<feature type="region of interest" description="Head domain (RuvB-H)" evidence="1">
    <location>
        <begin position="256"/>
        <end position="333"/>
    </location>
</feature>
<feature type="binding site" evidence="1">
    <location>
        <position position="21"/>
    </location>
    <ligand>
        <name>ATP</name>
        <dbReference type="ChEBI" id="CHEBI:30616"/>
    </ligand>
</feature>
<feature type="binding site" evidence="1">
    <location>
        <position position="22"/>
    </location>
    <ligand>
        <name>ATP</name>
        <dbReference type="ChEBI" id="CHEBI:30616"/>
    </ligand>
</feature>
<feature type="binding site" evidence="1">
    <location>
        <position position="63"/>
    </location>
    <ligand>
        <name>ATP</name>
        <dbReference type="ChEBI" id="CHEBI:30616"/>
    </ligand>
</feature>
<feature type="binding site" evidence="1">
    <location>
        <position position="66"/>
    </location>
    <ligand>
        <name>ATP</name>
        <dbReference type="ChEBI" id="CHEBI:30616"/>
    </ligand>
</feature>
<feature type="binding site" evidence="1">
    <location>
        <position position="67"/>
    </location>
    <ligand>
        <name>ATP</name>
        <dbReference type="ChEBI" id="CHEBI:30616"/>
    </ligand>
</feature>
<feature type="binding site" evidence="1">
    <location>
        <position position="67"/>
    </location>
    <ligand>
        <name>Mg(2+)</name>
        <dbReference type="ChEBI" id="CHEBI:18420"/>
    </ligand>
</feature>
<feature type="binding site" evidence="1">
    <location>
        <position position="68"/>
    </location>
    <ligand>
        <name>ATP</name>
        <dbReference type="ChEBI" id="CHEBI:30616"/>
    </ligand>
</feature>
<feature type="binding site" evidence="1">
    <location>
        <begin position="129"/>
        <end position="131"/>
    </location>
    <ligand>
        <name>ATP</name>
        <dbReference type="ChEBI" id="CHEBI:30616"/>
    </ligand>
</feature>
<feature type="binding site" evidence="1">
    <location>
        <position position="172"/>
    </location>
    <ligand>
        <name>ATP</name>
        <dbReference type="ChEBI" id="CHEBI:30616"/>
    </ligand>
</feature>
<feature type="binding site" evidence="1">
    <location>
        <position position="182"/>
    </location>
    <ligand>
        <name>ATP</name>
        <dbReference type="ChEBI" id="CHEBI:30616"/>
    </ligand>
</feature>
<feature type="binding site" evidence="1">
    <location>
        <position position="219"/>
    </location>
    <ligand>
        <name>ATP</name>
        <dbReference type="ChEBI" id="CHEBI:30616"/>
    </ligand>
</feature>
<feature type="binding site" evidence="1">
    <location>
        <position position="311"/>
    </location>
    <ligand>
        <name>DNA</name>
        <dbReference type="ChEBI" id="CHEBI:16991"/>
    </ligand>
</feature>
<feature type="binding site" evidence="1">
    <location>
        <position position="316"/>
    </location>
    <ligand>
        <name>DNA</name>
        <dbReference type="ChEBI" id="CHEBI:16991"/>
    </ligand>
</feature>
<protein>
    <recommendedName>
        <fullName evidence="1">Holliday junction branch migration complex subunit RuvB</fullName>
        <ecNumber evidence="1">3.6.4.-</ecNumber>
    </recommendedName>
</protein>
<organism>
    <name type="scientific">Bacillus anthracis (strain CDC 684 / NRRL 3495)</name>
    <dbReference type="NCBI Taxonomy" id="568206"/>
    <lineage>
        <taxon>Bacteria</taxon>
        <taxon>Bacillati</taxon>
        <taxon>Bacillota</taxon>
        <taxon>Bacilli</taxon>
        <taxon>Bacillales</taxon>
        <taxon>Bacillaceae</taxon>
        <taxon>Bacillus</taxon>
        <taxon>Bacillus cereus group</taxon>
    </lineage>
</organism>
<reference key="1">
    <citation type="submission" date="2008-10" db="EMBL/GenBank/DDBJ databases">
        <title>Genome sequence of Bacillus anthracis str. CDC 684.</title>
        <authorList>
            <person name="Dodson R.J."/>
            <person name="Munk A.C."/>
            <person name="Brettin T."/>
            <person name="Bruce D."/>
            <person name="Detter C."/>
            <person name="Tapia R."/>
            <person name="Han C."/>
            <person name="Sutton G."/>
            <person name="Sims D."/>
        </authorList>
    </citation>
    <scope>NUCLEOTIDE SEQUENCE [LARGE SCALE GENOMIC DNA]</scope>
    <source>
        <strain>CDC 684 / NRRL 3495</strain>
    </source>
</reference>
<name>RUVB_BACAC</name>
<sequence>MDERLLSGESAYEDADLEYSLRPQTLRQYIGQDKAKHNLEVFIEAAKMREETLDHVLLYGPPGLGKTTLANIIANEMGVNVRTTSGPAIERPGDLAAVLTSLQPGDVLFIDEIHRLHRSIEEVLYPAMEDFCLDIVIGKGPSARSVRLDLPPFTLVGATTRAGALSAPLRDRFGVLSRLEYYTVDQLSAIVERTAEVFEVEIDSLAALEIARRARGTPRIANRLLRRVRDFAQVRGNGTVTMEITQMALELLQVDKLGLDHIDHKLLLGIIEKFHGGPVGLETVSATIGEESHTIEDVYEPYLLQIGFLQRTPRGRIVTPLAYEHFGMEMPKV</sequence>